<reference key="1">
    <citation type="journal article" date="1994" name="J. Bacteriol.">
        <title>Sporulation and primary sigma factor homologous genes in Clostridium acetobutylicum.</title>
        <authorList>
            <person name="Sauer U."/>
            <person name="Treuner A."/>
            <person name="Buchholz M."/>
            <person name="Santangelo J.D."/>
            <person name="Durre P."/>
        </authorList>
    </citation>
    <scope>NUCLEOTIDE SEQUENCE [GENOMIC DNA]</scope>
    <source>
        <strain>ATCC 824 / DSM 792 / JCM 1419 / IAM 19013 / LMG 5710 / NBRC 13948 / NRRL B-527 / VKM B-1787 / 2291 / W</strain>
    </source>
</reference>
<reference key="2">
    <citation type="journal article" date="2001" name="J. Bacteriol.">
        <title>Genome sequence and comparative analysis of the solvent-producing bacterium Clostridium acetobutylicum.</title>
        <authorList>
            <person name="Noelling J."/>
            <person name="Breton G."/>
            <person name="Omelchenko M.V."/>
            <person name="Makarova K.S."/>
            <person name="Zeng Q."/>
            <person name="Gibson R."/>
            <person name="Lee H.M."/>
            <person name="Dubois J."/>
            <person name="Qiu D."/>
            <person name="Hitti J."/>
            <person name="Wolf Y.I."/>
            <person name="Tatusov R.L."/>
            <person name="Sabathe F."/>
            <person name="Doucette-Stamm L.A."/>
            <person name="Soucaille P."/>
            <person name="Daly M.J."/>
            <person name="Bennett G.N."/>
            <person name="Koonin E.V."/>
            <person name="Smith D.R."/>
        </authorList>
    </citation>
    <scope>NUCLEOTIDE SEQUENCE [LARGE SCALE GENOMIC DNA]</scope>
    <source>
        <strain>ATCC 824 / DSM 792 / JCM 1419 / IAM 19013 / LMG 5710 / NBRC 13948 / NRRL B-527 / VKM B-1787 / 2291 / W</strain>
    </source>
</reference>
<protein>
    <recommendedName>
        <fullName evidence="1">DNA primase</fullName>
        <ecNumber evidence="1">2.7.7.101</ecNumber>
    </recommendedName>
</protein>
<keyword id="KW-0235">DNA replication</keyword>
<keyword id="KW-0238">DNA-binding</keyword>
<keyword id="KW-0240">DNA-directed RNA polymerase</keyword>
<keyword id="KW-0460">Magnesium</keyword>
<keyword id="KW-0479">Metal-binding</keyword>
<keyword id="KW-0548">Nucleotidyltransferase</keyword>
<keyword id="KW-0639">Primosome</keyword>
<keyword id="KW-1185">Reference proteome</keyword>
<keyword id="KW-0804">Transcription</keyword>
<keyword id="KW-0808">Transferase</keyword>
<keyword id="KW-0862">Zinc</keyword>
<keyword id="KW-0863">Zinc-finger</keyword>
<name>DNAG_CLOAB</name>
<organism>
    <name type="scientific">Clostridium acetobutylicum (strain ATCC 824 / DSM 792 / JCM 1419 / IAM 19013 / LMG 5710 / NBRC 13948 / NRRL B-527 / VKM B-1787 / 2291 / W)</name>
    <dbReference type="NCBI Taxonomy" id="272562"/>
    <lineage>
        <taxon>Bacteria</taxon>
        <taxon>Bacillati</taxon>
        <taxon>Bacillota</taxon>
        <taxon>Clostridia</taxon>
        <taxon>Eubacteriales</taxon>
        <taxon>Clostridiaceae</taxon>
        <taxon>Clostridium</taxon>
    </lineage>
</organism>
<dbReference type="EC" id="2.7.7.101" evidence="1"/>
<dbReference type="EMBL" id="Z23080">
    <property type="protein sequence ID" value="CAA80624.1"/>
    <property type="molecule type" value="Genomic_DNA"/>
</dbReference>
<dbReference type="EMBL" id="AE001437">
    <property type="protein sequence ID" value="AAK79270.1"/>
    <property type="molecule type" value="Genomic_DNA"/>
</dbReference>
<dbReference type="PIR" id="C97060">
    <property type="entry name" value="C97060"/>
</dbReference>
<dbReference type="PIR" id="I40609">
    <property type="entry name" value="I40609"/>
</dbReference>
<dbReference type="RefSeq" id="NP_347930.1">
    <property type="nucleotide sequence ID" value="NC_003030.1"/>
</dbReference>
<dbReference type="RefSeq" id="WP_010964611.1">
    <property type="nucleotide sequence ID" value="NC_003030.1"/>
</dbReference>
<dbReference type="SMR" id="P33655"/>
<dbReference type="STRING" id="272562.CA_C1299"/>
<dbReference type="GeneID" id="44997805"/>
<dbReference type="KEGG" id="cac:CA_C1299"/>
<dbReference type="PATRIC" id="fig|272562.8.peg.1500"/>
<dbReference type="eggNOG" id="COG0358">
    <property type="taxonomic scope" value="Bacteria"/>
</dbReference>
<dbReference type="HOGENOM" id="CLU_013501_3_3_9"/>
<dbReference type="OrthoDB" id="9803773at2"/>
<dbReference type="Proteomes" id="UP000000814">
    <property type="component" value="Chromosome"/>
</dbReference>
<dbReference type="GO" id="GO:0005737">
    <property type="term" value="C:cytoplasm"/>
    <property type="evidence" value="ECO:0007669"/>
    <property type="project" value="TreeGrafter"/>
</dbReference>
<dbReference type="GO" id="GO:0000428">
    <property type="term" value="C:DNA-directed RNA polymerase complex"/>
    <property type="evidence" value="ECO:0007669"/>
    <property type="project" value="UniProtKB-KW"/>
</dbReference>
<dbReference type="GO" id="GO:1990077">
    <property type="term" value="C:primosome complex"/>
    <property type="evidence" value="ECO:0007669"/>
    <property type="project" value="UniProtKB-KW"/>
</dbReference>
<dbReference type="GO" id="GO:0003677">
    <property type="term" value="F:DNA binding"/>
    <property type="evidence" value="ECO:0007669"/>
    <property type="project" value="UniProtKB-KW"/>
</dbReference>
<dbReference type="GO" id="GO:0003899">
    <property type="term" value="F:DNA-directed RNA polymerase activity"/>
    <property type="evidence" value="ECO:0007669"/>
    <property type="project" value="InterPro"/>
</dbReference>
<dbReference type="GO" id="GO:0008270">
    <property type="term" value="F:zinc ion binding"/>
    <property type="evidence" value="ECO:0007669"/>
    <property type="project" value="UniProtKB-UniRule"/>
</dbReference>
<dbReference type="GO" id="GO:0006269">
    <property type="term" value="P:DNA replication, synthesis of primer"/>
    <property type="evidence" value="ECO:0007669"/>
    <property type="project" value="UniProtKB-UniRule"/>
</dbReference>
<dbReference type="CDD" id="cd03364">
    <property type="entry name" value="TOPRIM_DnaG_primases"/>
    <property type="match status" value="1"/>
</dbReference>
<dbReference type="FunFam" id="3.40.1360.10:FF:000002">
    <property type="entry name" value="DNA primase"/>
    <property type="match status" value="1"/>
</dbReference>
<dbReference type="FunFam" id="3.90.580.10:FF:000001">
    <property type="entry name" value="DNA primase"/>
    <property type="match status" value="1"/>
</dbReference>
<dbReference type="FunFam" id="3.90.980.10:FF:000001">
    <property type="entry name" value="DNA primase"/>
    <property type="match status" value="1"/>
</dbReference>
<dbReference type="Gene3D" id="3.40.1360.10">
    <property type="match status" value="1"/>
</dbReference>
<dbReference type="Gene3D" id="3.90.980.10">
    <property type="entry name" value="DNA primase, catalytic core, N-terminal domain"/>
    <property type="match status" value="1"/>
</dbReference>
<dbReference type="Gene3D" id="1.10.860.10">
    <property type="entry name" value="DNAb Helicase, Chain A"/>
    <property type="match status" value="1"/>
</dbReference>
<dbReference type="Gene3D" id="3.90.580.10">
    <property type="entry name" value="Zinc finger, CHC2-type domain"/>
    <property type="match status" value="1"/>
</dbReference>
<dbReference type="HAMAP" id="MF_00974">
    <property type="entry name" value="DNA_primase_DnaG"/>
    <property type="match status" value="1"/>
</dbReference>
<dbReference type="InterPro" id="IPR016136">
    <property type="entry name" value="DNA_helicase_N/primase_C"/>
</dbReference>
<dbReference type="InterPro" id="IPR037068">
    <property type="entry name" value="DNA_primase_core_N_sf"/>
</dbReference>
<dbReference type="InterPro" id="IPR019475">
    <property type="entry name" value="DNA_primase_DnaB-bd"/>
</dbReference>
<dbReference type="InterPro" id="IPR006295">
    <property type="entry name" value="DNA_primase_DnaG"/>
</dbReference>
<dbReference type="InterPro" id="IPR036977">
    <property type="entry name" value="DNA_primase_Znf_CHC2"/>
</dbReference>
<dbReference type="InterPro" id="IPR030846">
    <property type="entry name" value="DnaG_bac"/>
</dbReference>
<dbReference type="InterPro" id="IPR013264">
    <property type="entry name" value="DNAG_N"/>
</dbReference>
<dbReference type="InterPro" id="IPR050219">
    <property type="entry name" value="DnaG_primase"/>
</dbReference>
<dbReference type="InterPro" id="IPR034151">
    <property type="entry name" value="TOPRIM_DnaG_bac"/>
</dbReference>
<dbReference type="InterPro" id="IPR006171">
    <property type="entry name" value="TOPRIM_dom"/>
</dbReference>
<dbReference type="InterPro" id="IPR002694">
    <property type="entry name" value="Znf_CHC2"/>
</dbReference>
<dbReference type="NCBIfam" id="TIGR01391">
    <property type="entry name" value="dnaG"/>
    <property type="match status" value="1"/>
</dbReference>
<dbReference type="PANTHER" id="PTHR30313">
    <property type="entry name" value="DNA PRIMASE"/>
    <property type="match status" value="1"/>
</dbReference>
<dbReference type="PANTHER" id="PTHR30313:SF2">
    <property type="entry name" value="DNA PRIMASE"/>
    <property type="match status" value="1"/>
</dbReference>
<dbReference type="Pfam" id="PF10410">
    <property type="entry name" value="DnaB_bind"/>
    <property type="match status" value="1"/>
</dbReference>
<dbReference type="Pfam" id="PF08275">
    <property type="entry name" value="DNAG_N"/>
    <property type="match status" value="1"/>
</dbReference>
<dbReference type="Pfam" id="PF13155">
    <property type="entry name" value="Toprim_2"/>
    <property type="match status" value="1"/>
</dbReference>
<dbReference type="Pfam" id="PF01807">
    <property type="entry name" value="Zn_ribbon_DnaG"/>
    <property type="match status" value="1"/>
</dbReference>
<dbReference type="PIRSF" id="PIRSF002811">
    <property type="entry name" value="DnaG"/>
    <property type="match status" value="1"/>
</dbReference>
<dbReference type="SMART" id="SM00493">
    <property type="entry name" value="TOPRIM"/>
    <property type="match status" value="1"/>
</dbReference>
<dbReference type="SMART" id="SM00400">
    <property type="entry name" value="ZnF_CHCC"/>
    <property type="match status" value="1"/>
</dbReference>
<dbReference type="SUPFAM" id="SSF56731">
    <property type="entry name" value="DNA primase core"/>
    <property type="match status" value="1"/>
</dbReference>
<dbReference type="SUPFAM" id="SSF57783">
    <property type="entry name" value="Zinc beta-ribbon"/>
    <property type="match status" value="1"/>
</dbReference>
<dbReference type="PROSITE" id="PS50880">
    <property type="entry name" value="TOPRIM"/>
    <property type="match status" value="1"/>
</dbReference>
<comment type="function">
    <text evidence="1">RNA polymerase that catalyzes the synthesis of short RNA molecules used as primers for DNA polymerase during DNA replication.</text>
</comment>
<comment type="catalytic activity">
    <reaction evidence="1">
        <text>ssDNA + n NTP = ssDNA/pppN(pN)n-1 hybrid + (n-1) diphosphate.</text>
        <dbReference type="EC" id="2.7.7.101"/>
    </reaction>
</comment>
<comment type="cofactor">
    <cofactor evidence="1">
        <name>Zn(2+)</name>
        <dbReference type="ChEBI" id="CHEBI:29105"/>
    </cofactor>
    <text evidence="1">Binds 1 zinc ion per monomer.</text>
</comment>
<comment type="cofactor">
    <cofactor evidence="1">
        <name>Mg(2+)</name>
        <dbReference type="ChEBI" id="CHEBI:18420"/>
    </cofactor>
    <text evidence="1">Binds two Mg(2+) per subunit.</text>
</comment>
<comment type="subunit">
    <text evidence="1">Monomer. Interacts with DnaB.</text>
</comment>
<comment type="domain">
    <text evidence="1">Contains an N-terminal zinc-binding domain, a central core domain that contains the primase activity, and a C-terminal DnaB-binding domain.</text>
</comment>
<comment type="similarity">
    <text evidence="1">Belongs to the DnaG primase family.</text>
</comment>
<sequence>MECLIIAEDIIQKVKDLNDIVDIVSEKVKLKRTGRNYSGLCPFHHEKTPSFSVSQDKQIYKCFGCGEAGNVITFVMKTKNFSFVEAVKYLADKVNITIDDNKDKYYAKNKEKYDKLYSMNVEAARYFFRNLDSNSKAKKYFLDRGINQKTMRRFGLGYAKDDWRQLLSFMKSKGYTELELIEAGLIVQKNKAVYDRFRNRVIFPVFDYKGKVIGFGGRVLDDSKPKYLNSPETKIFKKGTNLYGLNFAVKNNIGDTIIIVEGYMDCISLHQYGINNVVASLGTALTKDQAKLLKRYASKVVISYDADTAGQAATLRGFDILREAGFDIKIIKIPDGKDPDEFVRKNGKEAFMRLVENAVSIIDYRINRAFENVNLKDSESVIKYVKDISEIIEELDPVEKDVYIKKISDKTGIREQAIYDLISTDIQKSGNNIEKMNKNSNYGQNLYVESAHVKSERYLLRLMIEHKDIRSYIESKISADDLIMESHKKIYNIILNFEDNLSSDLKSKFGFIESRCDDGESSSEIVKIEEQNIMLSENNVKDLVDDFITNIKKFRLEESKKKIMSEIKGLEEKGLFDETIELIKRMEEIQNQLDNL</sequence>
<proteinExistence type="inferred from homology"/>
<evidence type="ECO:0000255" key="1">
    <source>
        <dbReference type="HAMAP-Rule" id="MF_00974"/>
    </source>
</evidence>
<accession>P33655</accession>
<feature type="chain" id="PRO_0000180488" description="DNA primase">
    <location>
        <begin position="1"/>
        <end position="596"/>
    </location>
</feature>
<feature type="domain" description="Toprim" evidence="1">
    <location>
        <begin position="255"/>
        <end position="336"/>
    </location>
</feature>
<feature type="zinc finger region" description="CHC2-type" evidence="1">
    <location>
        <begin position="41"/>
        <end position="65"/>
    </location>
</feature>
<feature type="binding site" evidence="1">
    <location>
        <position position="261"/>
    </location>
    <ligand>
        <name>Mg(2+)</name>
        <dbReference type="ChEBI" id="CHEBI:18420"/>
        <label>1</label>
        <note>catalytic</note>
    </ligand>
</feature>
<feature type="binding site" evidence="1">
    <location>
        <position position="305"/>
    </location>
    <ligand>
        <name>Mg(2+)</name>
        <dbReference type="ChEBI" id="CHEBI:18420"/>
        <label>1</label>
        <note>catalytic</note>
    </ligand>
</feature>
<feature type="binding site" evidence="1">
    <location>
        <position position="305"/>
    </location>
    <ligand>
        <name>Mg(2+)</name>
        <dbReference type="ChEBI" id="CHEBI:18420"/>
        <label>2</label>
    </ligand>
</feature>
<feature type="binding site" evidence="1">
    <location>
        <position position="307"/>
    </location>
    <ligand>
        <name>Mg(2+)</name>
        <dbReference type="ChEBI" id="CHEBI:18420"/>
        <label>2</label>
    </ligand>
</feature>
<gene>
    <name evidence="1" type="primary">dnaG</name>
    <name type="synonym">dnaE</name>
    <name type="ordered locus">CA_C1299</name>
</gene>